<comment type="catalytic activity">
    <reaction>
        <text>ATP + H2O = ADP + phosphate + H(+)</text>
        <dbReference type="Rhea" id="RHEA:13065"/>
        <dbReference type="ChEBI" id="CHEBI:15377"/>
        <dbReference type="ChEBI" id="CHEBI:15378"/>
        <dbReference type="ChEBI" id="CHEBI:30616"/>
        <dbReference type="ChEBI" id="CHEBI:43474"/>
        <dbReference type="ChEBI" id="CHEBI:456216"/>
        <dbReference type="EC" id="3.6.4.13"/>
    </reaction>
</comment>
<comment type="subcellular location">
    <subcellularLocation>
        <location evidence="6">Plastid</location>
        <location evidence="6">Chloroplast</location>
    </subcellularLocation>
</comment>
<comment type="similarity">
    <text evidence="6">Belongs to the DEAD box helicase family. DEAH subfamily.</text>
</comment>
<comment type="sequence caution" evidence="6">
    <conflict type="erroneous gene model prediction">
        <sequence resource="EMBL-CDS" id="CAB89406"/>
    </conflict>
</comment>
<reference key="1">
    <citation type="journal article" date="2000" name="Nature">
        <title>Sequence and analysis of chromosome 5 of the plant Arabidopsis thaliana.</title>
        <authorList>
            <person name="Tabata S."/>
            <person name="Kaneko T."/>
            <person name="Nakamura Y."/>
            <person name="Kotani H."/>
            <person name="Kato T."/>
            <person name="Asamizu E."/>
            <person name="Miyajima N."/>
            <person name="Sasamoto S."/>
            <person name="Kimura T."/>
            <person name="Hosouchi T."/>
            <person name="Kawashima K."/>
            <person name="Kohara M."/>
            <person name="Matsumoto M."/>
            <person name="Matsuno A."/>
            <person name="Muraki A."/>
            <person name="Nakayama S."/>
            <person name="Nakazaki N."/>
            <person name="Naruo K."/>
            <person name="Okumura S."/>
            <person name="Shinpo S."/>
            <person name="Takeuchi C."/>
            <person name="Wada T."/>
            <person name="Watanabe A."/>
            <person name="Yamada M."/>
            <person name="Yasuda M."/>
            <person name="Sato S."/>
            <person name="de la Bastide M."/>
            <person name="Huang E."/>
            <person name="Spiegel L."/>
            <person name="Gnoj L."/>
            <person name="O'Shaughnessy A."/>
            <person name="Preston R."/>
            <person name="Habermann K."/>
            <person name="Murray J."/>
            <person name="Johnson D."/>
            <person name="Rohlfing T."/>
            <person name="Nelson J."/>
            <person name="Stoneking T."/>
            <person name="Pepin K."/>
            <person name="Spieth J."/>
            <person name="Sekhon M."/>
            <person name="Armstrong J."/>
            <person name="Becker M."/>
            <person name="Belter E."/>
            <person name="Cordum H."/>
            <person name="Cordes M."/>
            <person name="Courtney L."/>
            <person name="Courtney W."/>
            <person name="Dante M."/>
            <person name="Du H."/>
            <person name="Edwards J."/>
            <person name="Fryman J."/>
            <person name="Haakensen B."/>
            <person name="Lamar E."/>
            <person name="Latreille P."/>
            <person name="Leonard S."/>
            <person name="Meyer R."/>
            <person name="Mulvaney E."/>
            <person name="Ozersky P."/>
            <person name="Riley A."/>
            <person name="Strowmatt C."/>
            <person name="Wagner-McPherson C."/>
            <person name="Wollam A."/>
            <person name="Yoakum M."/>
            <person name="Bell M."/>
            <person name="Dedhia N."/>
            <person name="Parnell L."/>
            <person name="Shah R."/>
            <person name="Rodriguez M."/>
            <person name="Hoon See L."/>
            <person name="Vil D."/>
            <person name="Baker J."/>
            <person name="Kirchoff K."/>
            <person name="Toth K."/>
            <person name="King L."/>
            <person name="Bahret A."/>
            <person name="Miller B."/>
            <person name="Marra M.A."/>
            <person name="Martienssen R."/>
            <person name="McCombie W.R."/>
            <person name="Wilson R.K."/>
            <person name="Murphy G."/>
            <person name="Bancroft I."/>
            <person name="Volckaert G."/>
            <person name="Wambutt R."/>
            <person name="Duesterhoeft A."/>
            <person name="Stiekema W."/>
            <person name="Pohl T."/>
            <person name="Entian K.-D."/>
            <person name="Terryn N."/>
            <person name="Hartley N."/>
            <person name="Bent E."/>
            <person name="Johnson S."/>
            <person name="Langham S.-A."/>
            <person name="McCullagh B."/>
            <person name="Robben J."/>
            <person name="Grymonprez B."/>
            <person name="Zimmermann W."/>
            <person name="Ramsperger U."/>
            <person name="Wedler H."/>
            <person name="Balke K."/>
            <person name="Wedler E."/>
            <person name="Peters S."/>
            <person name="van Staveren M."/>
            <person name="Dirkse W."/>
            <person name="Mooijman P."/>
            <person name="Klein Lankhorst R."/>
            <person name="Weitzenegger T."/>
            <person name="Bothe G."/>
            <person name="Rose M."/>
            <person name="Hauf J."/>
            <person name="Berneiser S."/>
            <person name="Hempel S."/>
            <person name="Feldpausch M."/>
            <person name="Lamberth S."/>
            <person name="Villarroel R."/>
            <person name="Gielen J."/>
            <person name="Ardiles W."/>
            <person name="Bents O."/>
            <person name="Lemcke K."/>
            <person name="Kolesov G."/>
            <person name="Mayer K.F.X."/>
            <person name="Rudd S."/>
            <person name="Schoof H."/>
            <person name="Schueller C."/>
            <person name="Zaccaria P."/>
            <person name="Mewes H.-W."/>
            <person name="Bevan M."/>
            <person name="Fransz P.F."/>
        </authorList>
    </citation>
    <scope>NUCLEOTIDE SEQUENCE [LARGE SCALE GENOMIC DNA]</scope>
    <source>
        <strain>cv. Columbia</strain>
    </source>
</reference>
<reference key="2">
    <citation type="journal article" date="2017" name="Plant J.">
        <title>Araport11: a complete reannotation of the Arabidopsis thaliana reference genome.</title>
        <authorList>
            <person name="Cheng C.Y."/>
            <person name="Krishnakumar V."/>
            <person name="Chan A.P."/>
            <person name="Thibaud-Nissen F."/>
            <person name="Schobel S."/>
            <person name="Town C.D."/>
        </authorList>
    </citation>
    <scope>GENOME REANNOTATION</scope>
    <source>
        <strain>cv. Columbia</strain>
    </source>
</reference>
<reference key="3">
    <citation type="journal article" date="2013" name="PLoS ONE">
        <title>Genome-wide comparative in silico analysis of the RNA helicase gene family in Zea mays and Glycine max: a comparison with Arabidopsis and Oryza sativa.</title>
        <authorList>
            <person name="Xu R."/>
            <person name="Zhang S."/>
            <person name="Huang J."/>
            <person name="Zheng C."/>
        </authorList>
    </citation>
    <scope>GENE FAMILY</scope>
</reference>
<dbReference type="EC" id="3.6.4.13"/>
<dbReference type="EMBL" id="AL353995">
    <property type="protein sequence ID" value="CAB89406.1"/>
    <property type="status" value="ALT_SEQ"/>
    <property type="molecule type" value="Genomic_DNA"/>
</dbReference>
<dbReference type="EMBL" id="CP002688">
    <property type="protein sequence ID" value="AED91533.1"/>
    <property type="molecule type" value="Genomic_DNA"/>
</dbReference>
<dbReference type="PIR" id="T50002">
    <property type="entry name" value="T50002"/>
</dbReference>
<dbReference type="RefSeq" id="NP_196599.2">
    <property type="nucleotide sequence ID" value="NM_121075.3"/>
</dbReference>
<dbReference type="SMR" id="F4KGU4"/>
<dbReference type="FunCoup" id="F4KGU4">
    <property type="interactions" value="434"/>
</dbReference>
<dbReference type="STRING" id="3702.F4KGU4"/>
<dbReference type="iPTMnet" id="F4KGU4"/>
<dbReference type="PaxDb" id="3702-AT5G10370.1"/>
<dbReference type="ProteomicsDB" id="224222"/>
<dbReference type="EnsemblPlants" id="AT5G10370.1">
    <property type="protein sequence ID" value="AT5G10370.1"/>
    <property type="gene ID" value="AT5G10370"/>
</dbReference>
<dbReference type="GeneID" id="830901"/>
<dbReference type="Gramene" id="AT5G10370.1">
    <property type="protein sequence ID" value="AT5G10370.1"/>
    <property type="gene ID" value="AT5G10370"/>
</dbReference>
<dbReference type="KEGG" id="ath:AT5G10370"/>
<dbReference type="Araport" id="AT5G10370"/>
<dbReference type="TAIR" id="AT5G10370"/>
<dbReference type="eggNOG" id="KOG0922">
    <property type="taxonomic scope" value="Eukaryota"/>
</dbReference>
<dbReference type="eggNOG" id="KOG1812">
    <property type="taxonomic scope" value="Eukaryota"/>
</dbReference>
<dbReference type="HOGENOM" id="CLU_001832_9_0_1"/>
<dbReference type="InParanoid" id="F4KGU4"/>
<dbReference type="OMA" id="IICYPSY"/>
<dbReference type="PRO" id="PR:F4KGU4"/>
<dbReference type="Proteomes" id="UP000006548">
    <property type="component" value="Chromosome 5"/>
</dbReference>
<dbReference type="ExpressionAtlas" id="F4KGU4">
    <property type="expression patterns" value="baseline and differential"/>
</dbReference>
<dbReference type="GO" id="GO:0009507">
    <property type="term" value="C:chloroplast"/>
    <property type="evidence" value="ECO:0007669"/>
    <property type="project" value="UniProtKB-SubCell"/>
</dbReference>
<dbReference type="GO" id="GO:0005524">
    <property type="term" value="F:ATP binding"/>
    <property type="evidence" value="ECO:0007669"/>
    <property type="project" value="UniProtKB-KW"/>
</dbReference>
<dbReference type="GO" id="GO:0016887">
    <property type="term" value="F:ATP hydrolysis activity"/>
    <property type="evidence" value="ECO:0007669"/>
    <property type="project" value="RHEA"/>
</dbReference>
<dbReference type="GO" id="GO:0003676">
    <property type="term" value="F:nucleic acid binding"/>
    <property type="evidence" value="ECO:0007669"/>
    <property type="project" value="InterPro"/>
</dbReference>
<dbReference type="GO" id="GO:0003724">
    <property type="term" value="F:RNA helicase activity"/>
    <property type="evidence" value="ECO:0007669"/>
    <property type="project" value="UniProtKB-EC"/>
</dbReference>
<dbReference type="GO" id="GO:0016740">
    <property type="term" value="F:transferase activity"/>
    <property type="evidence" value="ECO:0007669"/>
    <property type="project" value="UniProtKB-KW"/>
</dbReference>
<dbReference type="GO" id="GO:0008270">
    <property type="term" value="F:zinc ion binding"/>
    <property type="evidence" value="ECO:0007669"/>
    <property type="project" value="UniProtKB-KW"/>
</dbReference>
<dbReference type="CDD" id="cd20335">
    <property type="entry name" value="BRcat_RBR"/>
    <property type="match status" value="1"/>
</dbReference>
<dbReference type="CDD" id="cd17917">
    <property type="entry name" value="DEXHc_RHA-like"/>
    <property type="match status" value="1"/>
</dbReference>
<dbReference type="CDD" id="cd22585">
    <property type="entry name" value="Rcat_RBR_DEAH12-like"/>
    <property type="match status" value="1"/>
</dbReference>
<dbReference type="CDD" id="cd18791">
    <property type="entry name" value="SF2_C_RHA"/>
    <property type="match status" value="1"/>
</dbReference>
<dbReference type="FunFam" id="1.20.120.1750:FF:000020">
    <property type="entry name" value="ATP-dependent RNA helicase DEAH12 chloroplastic"/>
    <property type="match status" value="1"/>
</dbReference>
<dbReference type="FunFam" id="3.40.50.300:FF:001279">
    <property type="entry name" value="ATP-dependent RNA helicase DEAH12 chloroplastic"/>
    <property type="match status" value="1"/>
</dbReference>
<dbReference type="FunFam" id="3.40.50.300:FF:002114">
    <property type="entry name" value="ATP-dependent RNA helicase DEAH12 chloroplastic"/>
    <property type="match status" value="1"/>
</dbReference>
<dbReference type="FunFam" id="1.10.10.2130:FF:000001">
    <property type="entry name" value="Pre-mRNA-splicing factor ATP-dependent RNA helicase"/>
    <property type="match status" value="1"/>
</dbReference>
<dbReference type="Gene3D" id="1.20.120.1750">
    <property type="match status" value="1"/>
</dbReference>
<dbReference type="Gene3D" id="1.10.10.2130">
    <property type="entry name" value="DEAH helicase family, winged-helix domain"/>
    <property type="match status" value="1"/>
</dbReference>
<dbReference type="Gene3D" id="3.40.50.300">
    <property type="entry name" value="P-loop containing nucleotide triphosphate hydrolases"/>
    <property type="match status" value="2"/>
</dbReference>
<dbReference type="Gene3D" id="3.30.40.10">
    <property type="entry name" value="Zinc/RING finger domain, C3HC4 (zinc finger)"/>
    <property type="match status" value="1"/>
</dbReference>
<dbReference type="InterPro" id="IPR011709">
    <property type="entry name" value="DEAD-box_helicase_OB_fold"/>
</dbReference>
<dbReference type="InterPro" id="IPR011545">
    <property type="entry name" value="DEAD/DEAH_box_helicase_dom"/>
</dbReference>
<dbReference type="InterPro" id="IPR042035">
    <property type="entry name" value="DEAH_win-hel_dom"/>
</dbReference>
<dbReference type="InterPro" id="IPR002464">
    <property type="entry name" value="DNA/RNA_helicase_DEAH_CS"/>
</dbReference>
<dbReference type="InterPro" id="IPR007502">
    <property type="entry name" value="Helicase-assoc_dom"/>
</dbReference>
<dbReference type="InterPro" id="IPR014001">
    <property type="entry name" value="Helicase_ATP-bd"/>
</dbReference>
<dbReference type="InterPro" id="IPR001650">
    <property type="entry name" value="Helicase_C-like"/>
</dbReference>
<dbReference type="InterPro" id="IPR002867">
    <property type="entry name" value="IBR_dom"/>
</dbReference>
<dbReference type="InterPro" id="IPR056245">
    <property type="entry name" value="KH_DEAH11/12"/>
</dbReference>
<dbReference type="InterPro" id="IPR056246">
    <property type="entry name" value="KH_DEAH11/12_1st"/>
</dbReference>
<dbReference type="InterPro" id="IPR056247">
    <property type="entry name" value="KH_DEAH11/12_2nd"/>
</dbReference>
<dbReference type="InterPro" id="IPR027417">
    <property type="entry name" value="P-loop_NTPase"/>
</dbReference>
<dbReference type="InterPro" id="IPR056248">
    <property type="entry name" value="RBD_DEAH11/12"/>
</dbReference>
<dbReference type="InterPro" id="IPR056244">
    <property type="entry name" value="RRM_DEAH11/12"/>
</dbReference>
<dbReference type="InterPro" id="IPR044066">
    <property type="entry name" value="TRIAD_supradom"/>
</dbReference>
<dbReference type="InterPro" id="IPR013087">
    <property type="entry name" value="Znf_C2H2_type"/>
</dbReference>
<dbReference type="InterPro" id="IPR018957">
    <property type="entry name" value="Znf_C3HC4_RING-type"/>
</dbReference>
<dbReference type="InterPro" id="IPR001841">
    <property type="entry name" value="Znf_RING"/>
</dbReference>
<dbReference type="InterPro" id="IPR013083">
    <property type="entry name" value="Znf_RING/FYVE/PHD"/>
</dbReference>
<dbReference type="InterPro" id="IPR017907">
    <property type="entry name" value="Znf_RING_CS"/>
</dbReference>
<dbReference type="PANTHER" id="PTHR18934">
    <property type="entry name" value="ATP-DEPENDENT RNA HELICASE"/>
    <property type="match status" value="1"/>
</dbReference>
<dbReference type="PANTHER" id="PTHR18934:SF81">
    <property type="entry name" value="ATP-DEPENDENT RNA HELICASE DEAH11, CHLOROPLASTIC-RELATED"/>
    <property type="match status" value="1"/>
</dbReference>
<dbReference type="Pfam" id="PF00270">
    <property type="entry name" value="DEAD"/>
    <property type="match status" value="1"/>
</dbReference>
<dbReference type="Pfam" id="PF00271">
    <property type="entry name" value="Helicase_C"/>
    <property type="match status" value="1"/>
</dbReference>
<dbReference type="Pfam" id="PF01485">
    <property type="entry name" value="IBR"/>
    <property type="match status" value="1"/>
</dbReference>
<dbReference type="Pfam" id="PF22191">
    <property type="entry name" value="IBR_1"/>
    <property type="match status" value="1"/>
</dbReference>
<dbReference type="Pfam" id="PF24471">
    <property type="entry name" value="KH_DEAH11"/>
    <property type="match status" value="1"/>
</dbReference>
<dbReference type="Pfam" id="PF24638">
    <property type="entry name" value="KH_DEAH11_1st"/>
    <property type="match status" value="1"/>
</dbReference>
<dbReference type="Pfam" id="PF24641">
    <property type="entry name" value="KH_DEAH11_2nd"/>
    <property type="match status" value="1"/>
</dbReference>
<dbReference type="Pfam" id="PF07717">
    <property type="entry name" value="OB_NTP_bind"/>
    <property type="match status" value="1"/>
</dbReference>
<dbReference type="Pfam" id="PF24475">
    <property type="entry name" value="RBD_DEAH11"/>
    <property type="match status" value="1"/>
</dbReference>
<dbReference type="Pfam" id="PF24637">
    <property type="entry name" value="RRM_DEAH11"/>
    <property type="match status" value="1"/>
</dbReference>
<dbReference type="Pfam" id="PF00097">
    <property type="entry name" value="zf-C3HC4"/>
    <property type="match status" value="1"/>
</dbReference>
<dbReference type="SMART" id="SM00487">
    <property type="entry name" value="DEXDc"/>
    <property type="match status" value="1"/>
</dbReference>
<dbReference type="SMART" id="SM00847">
    <property type="entry name" value="HA2"/>
    <property type="match status" value="1"/>
</dbReference>
<dbReference type="SMART" id="SM00490">
    <property type="entry name" value="HELICc"/>
    <property type="match status" value="1"/>
</dbReference>
<dbReference type="SMART" id="SM00647">
    <property type="entry name" value="IBR"/>
    <property type="match status" value="2"/>
</dbReference>
<dbReference type="SUPFAM" id="SSF52540">
    <property type="entry name" value="P-loop containing nucleoside triphosphate hydrolases"/>
    <property type="match status" value="1"/>
</dbReference>
<dbReference type="SUPFAM" id="SSF57850">
    <property type="entry name" value="RING/U-box"/>
    <property type="match status" value="3"/>
</dbReference>
<dbReference type="PROSITE" id="PS00690">
    <property type="entry name" value="DEAH_ATP_HELICASE"/>
    <property type="match status" value="1"/>
</dbReference>
<dbReference type="PROSITE" id="PS51192">
    <property type="entry name" value="HELICASE_ATP_BIND_1"/>
    <property type="match status" value="1"/>
</dbReference>
<dbReference type="PROSITE" id="PS51194">
    <property type="entry name" value="HELICASE_CTER"/>
    <property type="match status" value="1"/>
</dbReference>
<dbReference type="PROSITE" id="PS51873">
    <property type="entry name" value="TRIAD"/>
    <property type="match status" value="1"/>
</dbReference>
<dbReference type="PROSITE" id="PS00518">
    <property type="entry name" value="ZF_RING_1"/>
    <property type="match status" value="1"/>
</dbReference>
<dbReference type="PROSITE" id="PS50089">
    <property type="entry name" value="ZF_RING_2"/>
    <property type="match status" value="1"/>
</dbReference>
<organism>
    <name type="scientific">Arabidopsis thaliana</name>
    <name type="common">Mouse-ear cress</name>
    <dbReference type="NCBI Taxonomy" id="3702"/>
    <lineage>
        <taxon>Eukaryota</taxon>
        <taxon>Viridiplantae</taxon>
        <taxon>Streptophyta</taxon>
        <taxon>Embryophyta</taxon>
        <taxon>Tracheophyta</taxon>
        <taxon>Spermatophyta</taxon>
        <taxon>Magnoliopsida</taxon>
        <taxon>eudicotyledons</taxon>
        <taxon>Gunneridae</taxon>
        <taxon>Pentapetalae</taxon>
        <taxon>rosids</taxon>
        <taxon>malvids</taxon>
        <taxon>Brassicales</taxon>
        <taxon>Brassicaceae</taxon>
        <taxon>Camelineae</taxon>
        <taxon>Arabidopsis</taxon>
    </lineage>
</organism>
<feature type="transit peptide" description="Chloroplast" evidence="1">
    <location>
        <begin position="1"/>
        <end position="33"/>
    </location>
</feature>
<feature type="chain" id="PRO_0000434938" description="ATP-dependent RNA helicase DEAH12, chloroplastic">
    <location>
        <begin position="34"/>
        <end position="1775"/>
    </location>
</feature>
<feature type="domain" description="Helicase ATP-binding" evidence="2">
    <location>
        <begin position="316"/>
        <end position="480"/>
    </location>
</feature>
<feature type="domain" description="Helicase C-terminal" evidence="3">
    <location>
        <begin position="510"/>
        <end position="676"/>
    </location>
</feature>
<feature type="zinc finger region" description="RING-type 1" evidence="4">
    <location>
        <begin position="1564"/>
        <end position="1612"/>
    </location>
</feature>
<feature type="zinc finger region" description="IBR-type" evidence="4">
    <location>
        <begin position="1631"/>
        <end position="1696"/>
    </location>
</feature>
<feature type="zinc finger region" description="RING-type 2; atypical" evidence="4">
    <location>
        <begin position="1722"/>
        <end position="1750"/>
    </location>
</feature>
<feature type="region of interest" description="Disordered" evidence="5">
    <location>
        <begin position="1"/>
        <end position="77"/>
    </location>
</feature>
<feature type="region of interest" description="TRIAD supradomain" evidence="4">
    <location>
        <begin position="1560"/>
        <end position="1767"/>
    </location>
</feature>
<feature type="short sequence motif" description="DEAH box" evidence="2">
    <location>
        <begin position="427"/>
        <end position="430"/>
    </location>
</feature>
<feature type="compositionally biased region" description="Low complexity" evidence="5">
    <location>
        <begin position="21"/>
        <end position="34"/>
    </location>
</feature>
<feature type="compositionally biased region" description="Polar residues" evidence="5">
    <location>
        <begin position="35"/>
        <end position="60"/>
    </location>
</feature>
<feature type="active site" evidence="4">
    <location>
        <position position="1735"/>
    </location>
</feature>
<feature type="binding site" evidence="2">
    <location>
        <begin position="329"/>
        <end position="336"/>
    </location>
    <ligand>
        <name>ATP</name>
        <dbReference type="ChEBI" id="CHEBI:30616"/>
    </ligand>
</feature>
<feature type="binding site" evidence="4">
    <location>
        <position position="1564"/>
    </location>
    <ligand>
        <name>Zn(2+)</name>
        <dbReference type="ChEBI" id="CHEBI:29105"/>
        <label>1</label>
    </ligand>
</feature>
<feature type="binding site" evidence="4">
    <location>
        <position position="1567"/>
    </location>
    <ligand>
        <name>Zn(2+)</name>
        <dbReference type="ChEBI" id="CHEBI:29105"/>
        <label>1</label>
    </ligand>
</feature>
<feature type="binding site" evidence="4">
    <location>
        <position position="1580"/>
    </location>
    <ligand>
        <name>Zn(2+)</name>
        <dbReference type="ChEBI" id="CHEBI:29105"/>
        <label>2</label>
    </ligand>
</feature>
<feature type="binding site" evidence="4">
    <location>
        <position position="1582"/>
    </location>
    <ligand>
        <name>Zn(2+)</name>
        <dbReference type="ChEBI" id="CHEBI:29105"/>
        <label>2</label>
    </ligand>
</feature>
<feature type="binding site" evidence="4">
    <location>
        <position position="1585"/>
    </location>
    <ligand>
        <name>Zn(2+)</name>
        <dbReference type="ChEBI" id="CHEBI:29105"/>
        <label>1</label>
    </ligand>
</feature>
<feature type="binding site" evidence="4">
    <location>
        <position position="1588"/>
    </location>
    <ligand>
        <name>Zn(2+)</name>
        <dbReference type="ChEBI" id="CHEBI:29105"/>
        <label>1</label>
    </ligand>
</feature>
<feature type="binding site" evidence="4">
    <location>
        <position position="1607"/>
    </location>
    <ligand>
        <name>Zn(2+)</name>
        <dbReference type="ChEBI" id="CHEBI:29105"/>
        <label>2</label>
    </ligand>
</feature>
<feature type="binding site" evidence="4">
    <location>
        <position position="1612"/>
    </location>
    <ligand>
        <name>Zn(2+)</name>
        <dbReference type="ChEBI" id="CHEBI:29105"/>
        <label>2</label>
    </ligand>
</feature>
<feature type="binding site" evidence="4">
    <location>
        <position position="1652"/>
    </location>
    <ligand>
        <name>Zn(2+)</name>
        <dbReference type="ChEBI" id="CHEBI:29105"/>
        <label>3</label>
    </ligand>
</feature>
<feature type="binding site" evidence="4">
    <location>
        <position position="1657"/>
    </location>
    <ligand>
        <name>Zn(2+)</name>
        <dbReference type="ChEBI" id="CHEBI:29105"/>
        <label>3</label>
    </ligand>
</feature>
<feature type="binding site" evidence="4">
    <location>
        <position position="1675"/>
    </location>
    <ligand>
        <name>Zn(2+)</name>
        <dbReference type="ChEBI" id="CHEBI:29105"/>
        <label>3</label>
    </ligand>
</feature>
<feature type="binding site" evidence="4">
    <location>
        <position position="1678"/>
    </location>
    <ligand>
        <name>Zn(2+)</name>
        <dbReference type="ChEBI" id="CHEBI:29105"/>
        <label>3</label>
    </ligand>
</feature>
<feature type="binding site" evidence="4">
    <location>
        <position position="1683"/>
    </location>
    <ligand>
        <name>Zn(2+)</name>
        <dbReference type="ChEBI" id="CHEBI:29105"/>
        <label>4</label>
    </ligand>
</feature>
<feature type="binding site" evidence="4">
    <location>
        <position position="1686"/>
    </location>
    <ligand>
        <name>Zn(2+)</name>
        <dbReference type="ChEBI" id="CHEBI:29105"/>
        <label>4</label>
    </ligand>
</feature>
<feature type="binding site" evidence="4">
    <location>
        <position position="1691"/>
    </location>
    <ligand>
        <name>Zn(2+)</name>
        <dbReference type="ChEBI" id="CHEBI:29105"/>
        <label>4</label>
    </ligand>
</feature>
<feature type="binding site" evidence="4">
    <location>
        <position position="1696"/>
    </location>
    <ligand>
        <name>Zn(2+)</name>
        <dbReference type="ChEBI" id="CHEBI:29105"/>
        <label>4</label>
    </ligand>
</feature>
<feature type="binding site" evidence="4">
    <location>
        <position position="1722"/>
    </location>
    <ligand>
        <name>Zn(2+)</name>
        <dbReference type="ChEBI" id="CHEBI:29105"/>
        <label>5</label>
    </ligand>
</feature>
<feature type="binding site" evidence="4">
    <location>
        <position position="1725"/>
    </location>
    <ligand>
        <name>Zn(2+)</name>
        <dbReference type="ChEBI" id="CHEBI:29105"/>
        <label>5</label>
    </ligand>
</feature>
<feature type="binding site" evidence="4">
    <location>
        <position position="1740"/>
    </location>
    <ligand>
        <name>Zn(2+)</name>
        <dbReference type="ChEBI" id="CHEBI:29105"/>
        <label>5</label>
    </ligand>
</feature>
<feature type="binding site" evidence="4">
    <location>
        <position position="1742"/>
    </location>
    <ligand>
        <name>Zn(2+)</name>
        <dbReference type="ChEBI" id="CHEBI:29105"/>
        <label>5</label>
    </ligand>
</feature>
<evidence type="ECO:0000255" key="1"/>
<evidence type="ECO:0000255" key="2">
    <source>
        <dbReference type="PROSITE-ProRule" id="PRU00541"/>
    </source>
</evidence>
<evidence type="ECO:0000255" key="3">
    <source>
        <dbReference type="PROSITE-ProRule" id="PRU00542"/>
    </source>
</evidence>
<evidence type="ECO:0000255" key="4">
    <source>
        <dbReference type="PROSITE-ProRule" id="PRU01221"/>
    </source>
</evidence>
<evidence type="ECO:0000256" key="5">
    <source>
        <dbReference type="SAM" id="MobiDB-lite"/>
    </source>
</evidence>
<evidence type="ECO:0000305" key="6"/>
<evidence type="ECO:0000312" key="7">
    <source>
        <dbReference type="Araport" id="AT5G10370"/>
    </source>
</evidence>
<evidence type="ECO:0000312" key="8">
    <source>
        <dbReference type="EMBL" id="CAB89406.1"/>
    </source>
</evidence>
<name>DEAHC_ARATH</name>
<keyword id="KW-0067">ATP-binding</keyword>
<keyword id="KW-0150">Chloroplast</keyword>
<keyword id="KW-0347">Helicase</keyword>
<keyword id="KW-0378">Hydrolase</keyword>
<keyword id="KW-0479">Metal-binding</keyword>
<keyword id="KW-0547">Nucleotide-binding</keyword>
<keyword id="KW-0934">Plastid</keyword>
<keyword id="KW-1185">Reference proteome</keyword>
<keyword id="KW-0677">Repeat</keyword>
<keyword id="KW-0808">Transferase</keyword>
<keyword id="KW-0809">Transit peptide</keyword>
<keyword id="KW-0833">Ubl conjugation pathway</keyword>
<keyword id="KW-0862">Zinc</keyword>
<keyword id="KW-0863">Zinc-finger</keyword>
<accession>F4KGU4</accession>
<accession>Q9LX92</accession>
<sequence>MRNSFPPSDGGRSATDRRQQSSHSSSTNRYNSRSAQSSPPLNHRPTWNQQHSQYPNSNFPPNYRRDRNPSSGYSPPVTRARPNFIVQLLHPAAANSDTKLCFSTKKQEIESLALLCEIPEESIHVPQFGCIAGSFSFRQWVDARSAVVALWDYRLQGKHEFVPELIPNVIVPSDMNELKDRLRDLFSSHILSLMENGEGVKKVRLEIEEKSRQVVSFSSKRGLKFEVFEKKKAIEAERDLVVNRLEEFNNAMKSILRYLIGQDGYEFDLDDEEEGDVAVFCLEGAYDWRRIHCLIRRECRRLEDGLPIYAYRRQILKKIHREQIMVLIGETGSGKSTQLVQFLADSGVAASESIVCTQPRKIAAMTLADRVREESSGCYEENTVSCTPTFSSTEEISSKVVYMTDNCLLQHYMKDRSLSGISCVIIDEAHERSLNTDLLLALLKKLLSRRIDLRLVIMSATADAKQLSQYFFSCGILLVNGRNFPVEIVYSPSDTEENSVVGGIASYVGDVVKMAVEIHKTEKEGTILAFLTSQAEVEWACERFITPSAIALPLHGKLSFEEQFRVFQNHPGRRKVIFATNIAETSLTIPGVKYVIDSGMVKESKYEPRTGMSILKVCRVSQSSARQRAGRAGRTEPGRCYRLYSKNDFDSMNLNQEPEIRRVHLGVALLRMLALGVNNIAEFNFVDAPVPEAIAMAVQNLVQLGAVVEKNGVHELTQEGHCLVKLGLEPKLGKLILGCFRHRMGKEGIVLAAVMANASSIFCRVGNFDDKMKADRLKVQFCNQNGDLFTLLSVYKEWASLPRERRNKWCWENSLNAKSMRRCEDTVKELEICIERELTLVSPSYWVWNPNEGTKHDKHLKMVILASLAENVAMYTGYNQLGYEVALTGQQVQLHPSCSLLAFGQKPSWVVFGELLSIVDQYLVCVTACDFEALYMLDPPPPFDVSQMDERRLRIKKVVGCSSTVLKRFCGKSNRSLLSIVSRARSLCSDERIGIQVDVDQNEIRLYAPPLDMEKVSALVNDALECEKKWMHNECLEKYLYHGRGQVPIALFGSGAQIKHLEVDQRFLTVDVLYYGDDVVDDRELLTFLEKKIDGSICSIYKFAANKQDCDEKEKWGRITFLTPESAMKATEIQKFYFKGSVLKLFPSLSTGGGIFKMPYFSSVTAKIRWPRRESSGRGCLKCPSGDIHRILGDISSLEIGTNYVHIQRDQQSNDSILISGLGDLSEAEVLDVLEFRTQRRDLNFFIFRKKYSVQCPSPTACEEELHKRIFARMSAKNPEPNCVQVQVFEPKEDNYFMRALIKFDGRLHFEAAKALQELNGEVLPGCLPWQKIKCEQLFQSSIICSASIYNTVKRQLNVLLARFERQKGGECCLEPTHNGAYRVKITAYATRPVAEMRRELEELLRGRPINHPGFTRRVLQHLMSRDGINLMRKIQQETETYILLDRHNLTVRICGTSEKIAKAEQELIQALMDYHESKQLEIHLRGPEIRPDLMKEVVKRFGPELQGIKEKVHGVDLKLNTRYHVIQVHGSKEMRQEVQKMVNELAREKSALGEKPDEIEVECPICLSEVDDGYSLEGCSHLFCKACLLEQFEASMRNFDAFPILCSHIDCGAPIVLADMRALLSQEKLDELFSASLSSFVTSSDGKFRFCSTPDCPSVYRVAGPQESGEPFICGACHSEICTRCHLEYHPLITCERYKKFKENPDLSLKDWAKGKNVKECPICKSTIEKTDGCNHMKCRCGKHICWTCLDVFTQEEPCYAHLRTIHGGIGLVE</sequence>
<proteinExistence type="inferred from homology"/>
<protein>
    <recommendedName>
        <fullName>ATP-dependent RNA helicase DEAH12, chloroplastic</fullName>
        <ecNumber>3.6.4.13</ecNumber>
    </recommendedName>
</protein>
<gene>
    <name evidence="7" type="ordered locus">At5g10370</name>
    <name evidence="8" type="ORF">F12B17_280</name>
</gene>